<proteinExistence type="inferred from homology"/>
<keyword id="KW-0963">Cytoplasm</keyword>
<keyword id="KW-0227">DNA damage</keyword>
<keyword id="KW-0233">DNA recombination</keyword>
<keyword id="KW-0234">DNA repair</keyword>
<keyword id="KW-0238">DNA-binding</keyword>
<keyword id="KW-0255">Endonuclease</keyword>
<keyword id="KW-0378">Hydrolase</keyword>
<keyword id="KW-0460">Magnesium</keyword>
<keyword id="KW-0479">Metal-binding</keyword>
<keyword id="KW-0540">Nuclease</keyword>
<keyword id="KW-1185">Reference proteome</keyword>
<organism>
    <name type="scientific">Acidobacterium capsulatum (strain ATCC 51196 / DSM 11244 / BCRC 80197 / JCM 7670 / NBRC 15755 / NCIMB 13165 / 161)</name>
    <dbReference type="NCBI Taxonomy" id="240015"/>
    <lineage>
        <taxon>Bacteria</taxon>
        <taxon>Pseudomonadati</taxon>
        <taxon>Acidobacteriota</taxon>
        <taxon>Terriglobia</taxon>
        <taxon>Terriglobales</taxon>
        <taxon>Acidobacteriaceae</taxon>
        <taxon>Acidobacterium</taxon>
    </lineage>
</organism>
<evidence type="ECO:0000255" key="1">
    <source>
        <dbReference type="HAMAP-Rule" id="MF_00034"/>
    </source>
</evidence>
<accession>C1F130</accession>
<protein>
    <recommendedName>
        <fullName evidence="1">Crossover junction endodeoxyribonuclease RuvC</fullName>
        <ecNumber evidence="1">3.1.21.10</ecNumber>
    </recommendedName>
    <alternativeName>
        <fullName evidence="1">Holliday junction nuclease RuvC</fullName>
    </alternativeName>
    <alternativeName>
        <fullName evidence="1">Holliday junction resolvase RuvC</fullName>
    </alternativeName>
</protein>
<comment type="function">
    <text evidence="1">The RuvA-RuvB-RuvC complex processes Holliday junction (HJ) DNA during genetic recombination and DNA repair. Endonuclease that resolves HJ intermediates. Cleaves cruciform DNA by making single-stranded nicks across the HJ at symmetrical positions within the homologous arms, yielding a 5'-phosphate and a 3'-hydroxyl group; requires a central core of homology in the junction. The consensus cleavage sequence is 5'-(A/T)TT(C/G)-3'. Cleavage occurs on the 3'-side of the TT dinucleotide at the point of strand exchange. HJ branch migration catalyzed by RuvA-RuvB allows RuvC to scan DNA until it finds its consensus sequence, where it cleaves and resolves the cruciform DNA.</text>
</comment>
<comment type="catalytic activity">
    <reaction evidence="1">
        <text>Endonucleolytic cleavage at a junction such as a reciprocal single-stranded crossover between two homologous DNA duplexes (Holliday junction).</text>
        <dbReference type="EC" id="3.1.21.10"/>
    </reaction>
</comment>
<comment type="cofactor">
    <cofactor evidence="1">
        <name>Mg(2+)</name>
        <dbReference type="ChEBI" id="CHEBI:18420"/>
    </cofactor>
    <text evidence="1">Binds 2 Mg(2+) ion per subunit.</text>
</comment>
<comment type="subunit">
    <text evidence="1">Homodimer which binds Holliday junction (HJ) DNA. The HJ becomes 2-fold symmetrical on binding to RuvC with unstacked arms; it has a different conformation from HJ DNA in complex with RuvA. In the full resolvosome a probable DNA-RuvA(4)-RuvB(12)-RuvC(2) complex forms which resolves the HJ.</text>
</comment>
<comment type="subcellular location">
    <subcellularLocation>
        <location evidence="1">Cytoplasm</location>
    </subcellularLocation>
</comment>
<comment type="similarity">
    <text evidence="1">Belongs to the RuvC family.</text>
</comment>
<name>RUVC_ACIC5</name>
<feature type="chain" id="PRO_1000195227" description="Crossover junction endodeoxyribonuclease RuvC">
    <location>
        <begin position="1"/>
        <end position="171"/>
    </location>
</feature>
<feature type="active site" evidence="1">
    <location>
        <position position="7"/>
    </location>
</feature>
<feature type="active site" evidence="1">
    <location>
        <position position="74"/>
    </location>
</feature>
<feature type="active site" evidence="1">
    <location>
        <position position="147"/>
    </location>
</feature>
<feature type="binding site" evidence="1">
    <location>
        <position position="7"/>
    </location>
    <ligand>
        <name>Mg(2+)</name>
        <dbReference type="ChEBI" id="CHEBI:18420"/>
        <label>1</label>
    </ligand>
</feature>
<feature type="binding site" evidence="1">
    <location>
        <position position="74"/>
    </location>
    <ligand>
        <name>Mg(2+)</name>
        <dbReference type="ChEBI" id="CHEBI:18420"/>
        <label>2</label>
    </ligand>
</feature>
<feature type="binding site" evidence="1">
    <location>
        <position position="147"/>
    </location>
    <ligand>
        <name>Mg(2+)</name>
        <dbReference type="ChEBI" id="CHEBI:18420"/>
        <label>1</label>
    </ligand>
</feature>
<gene>
    <name evidence="1" type="primary">ruvC</name>
    <name type="ordered locus">ACP_0531</name>
</gene>
<dbReference type="EC" id="3.1.21.10" evidence="1"/>
<dbReference type="EMBL" id="CP001472">
    <property type="protein sequence ID" value="ACO32017.1"/>
    <property type="molecule type" value="Genomic_DNA"/>
</dbReference>
<dbReference type="RefSeq" id="WP_012680921.1">
    <property type="nucleotide sequence ID" value="NC_012483.1"/>
</dbReference>
<dbReference type="SMR" id="C1F130"/>
<dbReference type="FunCoup" id="C1F130">
    <property type="interactions" value="219"/>
</dbReference>
<dbReference type="STRING" id="240015.ACP_0531"/>
<dbReference type="KEGG" id="aca:ACP_0531"/>
<dbReference type="eggNOG" id="COG0817">
    <property type="taxonomic scope" value="Bacteria"/>
</dbReference>
<dbReference type="HOGENOM" id="CLU_091257_0_2_0"/>
<dbReference type="InParanoid" id="C1F130"/>
<dbReference type="OrthoDB" id="9805499at2"/>
<dbReference type="Proteomes" id="UP000002207">
    <property type="component" value="Chromosome"/>
</dbReference>
<dbReference type="GO" id="GO:0005737">
    <property type="term" value="C:cytoplasm"/>
    <property type="evidence" value="ECO:0007669"/>
    <property type="project" value="UniProtKB-SubCell"/>
</dbReference>
<dbReference type="GO" id="GO:0048476">
    <property type="term" value="C:Holliday junction resolvase complex"/>
    <property type="evidence" value="ECO:0007669"/>
    <property type="project" value="UniProtKB-UniRule"/>
</dbReference>
<dbReference type="GO" id="GO:0008821">
    <property type="term" value="F:crossover junction DNA endonuclease activity"/>
    <property type="evidence" value="ECO:0007669"/>
    <property type="project" value="UniProtKB-UniRule"/>
</dbReference>
<dbReference type="GO" id="GO:0003677">
    <property type="term" value="F:DNA binding"/>
    <property type="evidence" value="ECO:0007669"/>
    <property type="project" value="UniProtKB-KW"/>
</dbReference>
<dbReference type="GO" id="GO:0000287">
    <property type="term" value="F:magnesium ion binding"/>
    <property type="evidence" value="ECO:0007669"/>
    <property type="project" value="UniProtKB-UniRule"/>
</dbReference>
<dbReference type="GO" id="GO:0006310">
    <property type="term" value="P:DNA recombination"/>
    <property type="evidence" value="ECO:0007669"/>
    <property type="project" value="UniProtKB-UniRule"/>
</dbReference>
<dbReference type="GO" id="GO:0006281">
    <property type="term" value="P:DNA repair"/>
    <property type="evidence" value="ECO:0007669"/>
    <property type="project" value="UniProtKB-UniRule"/>
</dbReference>
<dbReference type="CDD" id="cd16962">
    <property type="entry name" value="RuvC"/>
    <property type="match status" value="1"/>
</dbReference>
<dbReference type="FunFam" id="3.30.420.10:FF:000002">
    <property type="entry name" value="Crossover junction endodeoxyribonuclease RuvC"/>
    <property type="match status" value="1"/>
</dbReference>
<dbReference type="Gene3D" id="3.30.420.10">
    <property type="entry name" value="Ribonuclease H-like superfamily/Ribonuclease H"/>
    <property type="match status" value="1"/>
</dbReference>
<dbReference type="HAMAP" id="MF_00034">
    <property type="entry name" value="RuvC"/>
    <property type="match status" value="1"/>
</dbReference>
<dbReference type="InterPro" id="IPR012337">
    <property type="entry name" value="RNaseH-like_sf"/>
</dbReference>
<dbReference type="InterPro" id="IPR036397">
    <property type="entry name" value="RNaseH_sf"/>
</dbReference>
<dbReference type="InterPro" id="IPR020563">
    <property type="entry name" value="X-over_junc_endoDNase_Mg_BS"/>
</dbReference>
<dbReference type="InterPro" id="IPR002176">
    <property type="entry name" value="X-over_junc_endoDNase_RuvC"/>
</dbReference>
<dbReference type="NCBIfam" id="TIGR00228">
    <property type="entry name" value="ruvC"/>
    <property type="match status" value="1"/>
</dbReference>
<dbReference type="PANTHER" id="PTHR30194">
    <property type="entry name" value="CROSSOVER JUNCTION ENDODEOXYRIBONUCLEASE RUVC"/>
    <property type="match status" value="1"/>
</dbReference>
<dbReference type="PANTHER" id="PTHR30194:SF3">
    <property type="entry name" value="CROSSOVER JUNCTION ENDODEOXYRIBONUCLEASE RUVC"/>
    <property type="match status" value="1"/>
</dbReference>
<dbReference type="Pfam" id="PF02075">
    <property type="entry name" value="RuvC"/>
    <property type="match status" value="1"/>
</dbReference>
<dbReference type="PRINTS" id="PR00696">
    <property type="entry name" value="RSOLVASERUVC"/>
</dbReference>
<dbReference type="SUPFAM" id="SSF53098">
    <property type="entry name" value="Ribonuclease H-like"/>
    <property type="match status" value="1"/>
</dbReference>
<dbReference type="PROSITE" id="PS01321">
    <property type="entry name" value="RUVC"/>
    <property type="match status" value="1"/>
</dbReference>
<sequence length="171" mass="18310">MRIFGIDCGSEITGYGIVECPDGTPRSGQPDLRLIAFGGIRPAKKLTLAERLAFVHRELLTQLAAHQPDLVAVEEVFYSVNAKSALKLGHVRGVALLAAATAGLPIAEYAPLTIKSTVTGYGLAQKEQVQFMVARLLHMPEPPEPADAADALAIAICHIHHAQTIQAQQSR</sequence>
<reference key="1">
    <citation type="journal article" date="2009" name="Appl. Environ. Microbiol.">
        <title>Three genomes from the phylum Acidobacteria provide insight into the lifestyles of these microorganisms in soils.</title>
        <authorList>
            <person name="Ward N.L."/>
            <person name="Challacombe J.F."/>
            <person name="Janssen P.H."/>
            <person name="Henrissat B."/>
            <person name="Coutinho P.M."/>
            <person name="Wu M."/>
            <person name="Xie G."/>
            <person name="Haft D.H."/>
            <person name="Sait M."/>
            <person name="Badger J."/>
            <person name="Barabote R.D."/>
            <person name="Bradley B."/>
            <person name="Brettin T.S."/>
            <person name="Brinkac L.M."/>
            <person name="Bruce D."/>
            <person name="Creasy T."/>
            <person name="Daugherty S.C."/>
            <person name="Davidsen T.M."/>
            <person name="DeBoy R.T."/>
            <person name="Detter J.C."/>
            <person name="Dodson R.J."/>
            <person name="Durkin A.S."/>
            <person name="Ganapathy A."/>
            <person name="Gwinn-Giglio M."/>
            <person name="Han C.S."/>
            <person name="Khouri H."/>
            <person name="Kiss H."/>
            <person name="Kothari S.P."/>
            <person name="Madupu R."/>
            <person name="Nelson K.E."/>
            <person name="Nelson W.C."/>
            <person name="Paulsen I."/>
            <person name="Penn K."/>
            <person name="Ren Q."/>
            <person name="Rosovitz M.J."/>
            <person name="Selengut J.D."/>
            <person name="Shrivastava S."/>
            <person name="Sullivan S.A."/>
            <person name="Tapia R."/>
            <person name="Thompson L.S."/>
            <person name="Watkins K.L."/>
            <person name="Yang Q."/>
            <person name="Yu C."/>
            <person name="Zafar N."/>
            <person name="Zhou L."/>
            <person name="Kuske C.R."/>
        </authorList>
    </citation>
    <scope>NUCLEOTIDE SEQUENCE [LARGE SCALE GENOMIC DNA]</scope>
    <source>
        <strain>ATCC 51196 / DSM 11244 / BCRC 80197 / JCM 7670 / NBRC 15755 / NCIMB 13165 / 161</strain>
    </source>
</reference>